<comment type="function">
    <text evidence="1">Succinyl-CoA synthetase functions in the citric acid cycle (TCA), coupling the hydrolysis of succinyl-CoA to the synthesis of either ATP or GTP and thus represents the only step of substrate-level phosphorylation in the TCA. The beta subunit provides nucleotide specificity of the enzyme and binds the substrate succinate, while the binding sites for coenzyme A and phosphate are found in the alpha subunit.</text>
</comment>
<comment type="catalytic activity">
    <reaction evidence="1">
        <text>succinate + ATP + CoA = succinyl-CoA + ADP + phosphate</text>
        <dbReference type="Rhea" id="RHEA:17661"/>
        <dbReference type="ChEBI" id="CHEBI:30031"/>
        <dbReference type="ChEBI" id="CHEBI:30616"/>
        <dbReference type="ChEBI" id="CHEBI:43474"/>
        <dbReference type="ChEBI" id="CHEBI:57287"/>
        <dbReference type="ChEBI" id="CHEBI:57292"/>
        <dbReference type="ChEBI" id="CHEBI:456216"/>
        <dbReference type="EC" id="6.2.1.5"/>
    </reaction>
    <physiologicalReaction direction="right-to-left" evidence="1">
        <dbReference type="Rhea" id="RHEA:17663"/>
    </physiologicalReaction>
</comment>
<comment type="catalytic activity">
    <reaction evidence="1">
        <text>GTP + succinate + CoA = succinyl-CoA + GDP + phosphate</text>
        <dbReference type="Rhea" id="RHEA:22120"/>
        <dbReference type="ChEBI" id="CHEBI:30031"/>
        <dbReference type="ChEBI" id="CHEBI:37565"/>
        <dbReference type="ChEBI" id="CHEBI:43474"/>
        <dbReference type="ChEBI" id="CHEBI:57287"/>
        <dbReference type="ChEBI" id="CHEBI:57292"/>
        <dbReference type="ChEBI" id="CHEBI:58189"/>
    </reaction>
    <physiologicalReaction direction="right-to-left" evidence="1">
        <dbReference type="Rhea" id="RHEA:22122"/>
    </physiologicalReaction>
</comment>
<comment type="cofactor">
    <cofactor evidence="1">
        <name>Mg(2+)</name>
        <dbReference type="ChEBI" id="CHEBI:18420"/>
    </cofactor>
    <text evidence="1">Binds 1 Mg(2+) ion per subunit.</text>
</comment>
<comment type="pathway">
    <text evidence="1">Carbohydrate metabolism; tricarboxylic acid cycle; succinate from succinyl-CoA (ligase route): step 1/1.</text>
</comment>
<comment type="subunit">
    <text evidence="1">Heterotetramer of two alpha and two beta subunits.</text>
</comment>
<comment type="similarity">
    <text evidence="1">Belongs to the succinate/malate CoA ligase beta subunit family.</text>
</comment>
<reference key="1">
    <citation type="submission" date="2007-05" db="EMBL/GenBank/DDBJ databases">
        <title>Complete sequence of Pseudomonas putida F1.</title>
        <authorList>
            <consortium name="US DOE Joint Genome Institute"/>
            <person name="Copeland A."/>
            <person name="Lucas S."/>
            <person name="Lapidus A."/>
            <person name="Barry K."/>
            <person name="Detter J.C."/>
            <person name="Glavina del Rio T."/>
            <person name="Hammon N."/>
            <person name="Israni S."/>
            <person name="Dalin E."/>
            <person name="Tice H."/>
            <person name="Pitluck S."/>
            <person name="Chain P."/>
            <person name="Malfatti S."/>
            <person name="Shin M."/>
            <person name="Vergez L."/>
            <person name="Schmutz J."/>
            <person name="Larimer F."/>
            <person name="Land M."/>
            <person name="Hauser L."/>
            <person name="Kyrpides N."/>
            <person name="Lykidis A."/>
            <person name="Parales R."/>
            <person name="Richardson P."/>
        </authorList>
    </citation>
    <scope>NUCLEOTIDE SEQUENCE [LARGE SCALE GENOMIC DNA]</scope>
    <source>
        <strain>ATCC 700007 / DSM 6899 / JCM 31910 / BCRC 17059 / LMG 24140 / F1</strain>
    </source>
</reference>
<evidence type="ECO:0000255" key="1">
    <source>
        <dbReference type="HAMAP-Rule" id="MF_00558"/>
    </source>
</evidence>
<sequence length="388" mass="41239">MNLHEYQGKQLFAEYGLPVSKGFAVDTPEQAAEACDKIGGNEWVVKAQVHAGGRGKAGGVKLVRSKEDAKAFAAQWLGKNLVTYQTDANGQPVSKILVESCTDIAKELYLGAVVDRSSRRIVFMASTEGGVDIEKVAHETPEKILKATIDPLVGAQPFQGRELAFQLGLEGKQVQQFAKIFVGLAKLFKDHDLALLEVNPLVIKADGDLHCLDAKINIDANAMYRQPKLKTFHDPSQDDAREAHAAKFELNYVALEGNIGCMVNGAGLAMGTMDIVNLHGGKPANFLDVGGGATKERVTEAFKIILSDSNVAAVLVNIFGGIVRCDMIAEGIIGAVKEVGVKVPVVVRLEGNNAELGAKVLAESGLNIIAATSLTDAAQQVVKAAEGK</sequence>
<name>SUCC_PSEP1</name>
<keyword id="KW-0067">ATP-binding</keyword>
<keyword id="KW-0436">Ligase</keyword>
<keyword id="KW-0460">Magnesium</keyword>
<keyword id="KW-0479">Metal-binding</keyword>
<keyword id="KW-0547">Nucleotide-binding</keyword>
<keyword id="KW-0816">Tricarboxylic acid cycle</keyword>
<dbReference type="EC" id="6.2.1.5" evidence="1"/>
<dbReference type="EMBL" id="CP000712">
    <property type="protein sequence ID" value="ABQ77824.1"/>
    <property type="molecule type" value="Genomic_DNA"/>
</dbReference>
<dbReference type="SMR" id="A5W114"/>
<dbReference type="KEGG" id="ppf:Pput_1668"/>
<dbReference type="eggNOG" id="COG0045">
    <property type="taxonomic scope" value="Bacteria"/>
</dbReference>
<dbReference type="HOGENOM" id="CLU_037430_0_2_6"/>
<dbReference type="UniPathway" id="UPA00223">
    <property type="reaction ID" value="UER00999"/>
</dbReference>
<dbReference type="GO" id="GO:0005829">
    <property type="term" value="C:cytosol"/>
    <property type="evidence" value="ECO:0007669"/>
    <property type="project" value="TreeGrafter"/>
</dbReference>
<dbReference type="GO" id="GO:0042709">
    <property type="term" value="C:succinate-CoA ligase complex"/>
    <property type="evidence" value="ECO:0007669"/>
    <property type="project" value="TreeGrafter"/>
</dbReference>
<dbReference type="GO" id="GO:0005524">
    <property type="term" value="F:ATP binding"/>
    <property type="evidence" value="ECO:0007669"/>
    <property type="project" value="UniProtKB-UniRule"/>
</dbReference>
<dbReference type="GO" id="GO:0000287">
    <property type="term" value="F:magnesium ion binding"/>
    <property type="evidence" value="ECO:0007669"/>
    <property type="project" value="UniProtKB-UniRule"/>
</dbReference>
<dbReference type="GO" id="GO:0004775">
    <property type="term" value="F:succinate-CoA ligase (ADP-forming) activity"/>
    <property type="evidence" value="ECO:0007669"/>
    <property type="project" value="UniProtKB-UniRule"/>
</dbReference>
<dbReference type="GO" id="GO:0004776">
    <property type="term" value="F:succinate-CoA ligase (GDP-forming) activity"/>
    <property type="evidence" value="ECO:0007669"/>
    <property type="project" value="RHEA"/>
</dbReference>
<dbReference type="GO" id="GO:0006104">
    <property type="term" value="P:succinyl-CoA metabolic process"/>
    <property type="evidence" value="ECO:0007669"/>
    <property type="project" value="TreeGrafter"/>
</dbReference>
<dbReference type="GO" id="GO:0006099">
    <property type="term" value="P:tricarboxylic acid cycle"/>
    <property type="evidence" value="ECO:0007669"/>
    <property type="project" value="UniProtKB-UniRule"/>
</dbReference>
<dbReference type="FunFam" id="3.30.1490.20:FF:000002">
    <property type="entry name" value="Succinate--CoA ligase [ADP-forming] subunit beta"/>
    <property type="match status" value="1"/>
</dbReference>
<dbReference type="FunFam" id="3.30.470.20:FF:000002">
    <property type="entry name" value="Succinate--CoA ligase [ADP-forming] subunit beta"/>
    <property type="match status" value="1"/>
</dbReference>
<dbReference type="FunFam" id="3.40.50.261:FF:000001">
    <property type="entry name" value="Succinate--CoA ligase [ADP-forming] subunit beta"/>
    <property type="match status" value="1"/>
</dbReference>
<dbReference type="Gene3D" id="3.30.1490.20">
    <property type="entry name" value="ATP-grasp fold, A domain"/>
    <property type="match status" value="1"/>
</dbReference>
<dbReference type="Gene3D" id="3.30.470.20">
    <property type="entry name" value="ATP-grasp fold, B domain"/>
    <property type="match status" value="1"/>
</dbReference>
<dbReference type="Gene3D" id="3.40.50.261">
    <property type="entry name" value="Succinyl-CoA synthetase domains"/>
    <property type="match status" value="1"/>
</dbReference>
<dbReference type="HAMAP" id="MF_00558">
    <property type="entry name" value="Succ_CoA_beta"/>
    <property type="match status" value="1"/>
</dbReference>
<dbReference type="InterPro" id="IPR011761">
    <property type="entry name" value="ATP-grasp"/>
</dbReference>
<dbReference type="InterPro" id="IPR013650">
    <property type="entry name" value="ATP-grasp_succ-CoA_synth-type"/>
</dbReference>
<dbReference type="InterPro" id="IPR013815">
    <property type="entry name" value="ATP_grasp_subdomain_1"/>
</dbReference>
<dbReference type="InterPro" id="IPR017866">
    <property type="entry name" value="Succ-CoA_synthase_bsu_CS"/>
</dbReference>
<dbReference type="InterPro" id="IPR005811">
    <property type="entry name" value="SUCC_ACL_C"/>
</dbReference>
<dbReference type="InterPro" id="IPR005809">
    <property type="entry name" value="Succ_CoA_ligase-like_bsu"/>
</dbReference>
<dbReference type="InterPro" id="IPR016102">
    <property type="entry name" value="Succinyl-CoA_synth-like"/>
</dbReference>
<dbReference type="NCBIfam" id="NF001913">
    <property type="entry name" value="PRK00696.1"/>
    <property type="match status" value="1"/>
</dbReference>
<dbReference type="NCBIfam" id="TIGR01016">
    <property type="entry name" value="sucCoAbeta"/>
    <property type="match status" value="1"/>
</dbReference>
<dbReference type="PANTHER" id="PTHR11815:SF10">
    <property type="entry name" value="SUCCINATE--COA LIGASE [GDP-FORMING] SUBUNIT BETA, MITOCHONDRIAL"/>
    <property type="match status" value="1"/>
</dbReference>
<dbReference type="PANTHER" id="PTHR11815">
    <property type="entry name" value="SUCCINYL-COA SYNTHETASE BETA CHAIN"/>
    <property type="match status" value="1"/>
</dbReference>
<dbReference type="Pfam" id="PF08442">
    <property type="entry name" value="ATP-grasp_2"/>
    <property type="match status" value="1"/>
</dbReference>
<dbReference type="Pfam" id="PF00549">
    <property type="entry name" value="Ligase_CoA"/>
    <property type="match status" value="1"/>
</dbReference>
<dbReference type="PIRSF" id="PIRSF001554">
    <property type="entry name" value="SucCS_beta"/>
    <property type="match status" value="1"/>
</dbReference>
<dbReference type="SUPFAM" id="SSF56059">
    <property type="entry name" value="Glutathione synthetase ATP-binding domain-like"/>
    <property type="match status" value="1"/>
</dbReference>
<dbReference type="SUPFAM" id="SSF52210">
    <property type="entry name" value="Succinyl-CoA synthetase domains"/>
    <property type="match status" value="1"/>
</dbReference>
<dbReference type="PROSITE" id="PS50975">
    <property type="entry name" value="ATP_GRASP"/>
    <property type="match status" value="1"/>
</dbReference>
<dbReference type="PROSITE" id="PS01217">
    <property type="entry name" value="SUCCINYL_COA_LIG_3"/>
    <property type="match status" value="1"/>
</dbReference>
<accession>A5W114</accession>
<feature type="chain" id="PRO_1000082171" description="Succinate--CoA ligase [ADP-forming] subunit beta">
    <location>
        <begin position="1"/>
        <end position="388"/>
    </location>
</feature>
<feature type="domain" description="ATP-grasp" evidence="1">
    <location>
        <begin position="9"/>
        <end position="244"/>
    </location>
</feature>
<feature type="binding site" evidence="1">
    <location>
        <position position="46"/>
    </location>
    <ligand>
        <name>ATP</name>
        <dbReference type="ChEBI" id="CHEBI:30616"/>
    </ligand>
</feature>
<feature type="binding site" evidence="1">
    <location>
        <begin position="53"/>
        <end position="55"/>
    </location>
    <ligand>
        <name>ATP</name>
        <dbReference type="ChEBI" id="CHEBI:30616"/>
    </ligand>
</feature>
<feature type="binding site" evidence="1">
    <location>
        <position position="99"/>
    </location>
    <ligand>
        <name>ATP</name>
        <dbReference type="ChEBI" id="CHEBI:30616"/>
    </ligand>
</feature>
<feature type="binding site" evidence="1">
    <location>
        <position position="102"/>
    </location>
    <ligand>
        <name>ATP</name>
        <dbReference type="ChEBI" id="CHEBI:30616"/>
    </ligand>
</feature>
<feature type="binding site" evidence="1">
    <location>
        <position position="107"/>
    </location>
    <ligand>
        <name>ATP</name>
        <dbReference type="ChEBI" id="CHEBI:30616"/>
    </ligand>
</feature>
<feature type="binding site" evidence="1">
    <location>
        <position position="199"/>
    </location>
    <ligand>
        <name>Mg(2+)</name>
        <dbReference type="ChEBI" id="CHEBI:18420"/>
    </ligand>
</feature>
<feature type="binding site" evidence="1">
    <location>
        <position position="213"/>
    </location>
    <ligand>
        <name>Mg(2+)</name>
        <dbReference type="ChEBI" id="CHEBI:18420"/>
    </ligand>
</feature>
<feature type="binding site" evidence="1">
    <location>
        <position position="264"/>
    </location>
    <ligand>
        <name>substrate</name>
        <note>ligand shared with subunit alpha</note>
    </ligand>
</feature>
<feature type="binding site" evidence="1">
    <location>
        <begin position="321"/>
        <end position="323"/>
    </location>
    <ligand>
        <name>substrate</name>
        <note>ligand shared with subunit alpha</note>
    </ligand>
</feature>
<gene>
    <name evidence="1" type="primary">sucC</name>
    <name type="ordered locus">Pput_1668</name>
</gene>
<organism>
    <name type="scientific">Pseudomonas putida (strain ATCC 700007 / DSM 6899 / JCM 31910 / BCRC 17059 / LMG 24140 / F1)</name>
    <dbReference type="NCBI Taxonomy" id="351746"/>
    <lineage>
        <taxon>Bacteria</taxon>
        <taxon>Pseudomonadati</taxon>
        <taxon>Pseudomonadota</taxon>
        <taxon>Gammaproteobacteria</taxon>
        <taxon>Pseudomonadales</taxon>
        <taxon>Pseudomonadaceae</taxon>
        <taxon>Pseudomonas</taxon>
    </lineage>
</organism>
<protein>
    <recommendedName>
        <fullName evidence="1">Succinate--CoA ligase [ADP-forming] subunit beta</fullName>
        <ecNumber evidence="1">6.2.1.5</ecNumber>
    </recommendedName>
    <alternativeName>
        <fullName evidence="1">Succinyl-CoA synthetase subunit beta</fullName>
        <shortName evidence="1">SCS-beta</shortName>
    </alternativeName>
</protein>
<proteinExistence type="inferred from homology"/>